<reference key="1">
    <citation type="journal article" date="2011" name="J. Bacteriol.">
        <title>Comparative genomics of 28 Salmonella enterica isolates: evidence for CRISPR-mediated adaptive sublineage evolution.</title>
        <authorList>
            <person name="Fricke W.F."/>
            <person name="Mammel M.K."/>
            <person name="McDermott P.F."/>
            <person name="Tartera C."/>
            <person name="White D.G."/>
            <person name="Leclerc J.E."/>
            <person name="Ravel J."/>
            <person name="Cebula T.A."/>
        </authorList>
    </citation>
    <scope>NUCLEOTIDE SEQUENCE [LARGE SCALE GENOMIC DNA]</scope>
    <source>
        <strain>SL483</strain>
    </source>
</reference>
<accession>B5F0U2</accession>
<proteinExistence type="inferred from homology"/>
<organism>
    <name type="scientific">Salmonella agona (strain SL483)</name>
    <dbReference type="NCBI Taxonomy" id="454166"/>
    <lineage>
        <taxon>Bacteria</taxon>
        <taxon>Pseudomonadati</taxon>
        <taxon>Pseudomonadota</taxon>
        <taxon>Gammaproteobacteria</taxon>
        <taxon>Enterobacterales</taxon>
        <taxon>Enterobacteriaceae</taxon>
        <taxon>Salmonella</taxon>
    </lineage>
</organism>
<sequence>MELYLDTANVAEVERLARIFPIAGVTTNPSIVAASKESIWDVLPRLQNAIGEEGTLFAQTMSRDAKGMVEEAKRLNNAIPGIVVKIPVTAEGLAAIKLLKKEDIVTLGTAVYSASQGLLAALAGAKYVAPYVNRVDAQGGDGIRMVQELQTLLEHHAPDSMVLAASFKTPRQALDCLLAGCQAITLPLDVAQQMLNTPAVESAIEKFEQDWKNAFGNLNL</sequence>
<gene>
    <name evidence="1" type="primary">fsa</name>
    <name type="ordered locus">SeAg_B4357</name>
</gene>
<dbReference type="EC" id="4.1.2.-" evidence="1"/>
<dbReference type="EMBL" id="CP001138">
    <property type="protein sequence ID" value="ACH51812.1"/>
    <property type="molecule type" value="Genomic_DNA"/>
</dbReference>
<dbReference type="RefSeq" id="WP_000424863.1">
    <property type="nucleotide sequence ID" value="NC_011149.1"/>
</dbReference>
<dbReference type="SMR" id="B5F0U2"/>
<dbReference type="KEGG" id="sea:SeAg_B4357"/>
<dbReference type="HOGENOM" id="CLU_079764_2_0_6"/>
<dbReference type="Proteomes" id="UP000008819">
    <property type="component" value="Chromosome"/>
</dbReference>
<dbReference type="GO" id="GO:0005737">
    <property type="term" value="C:cytoplasm"/>
    <property type="evidence" value="ECO:0007669"/>
    <property type="project" value="UniProtKB-SubCell"/>
</dbReference>
<dbReference type="GO" id="GO:0097023">
    <property type="term" value="F:fructose 6-phosphate aldolase activity"/>
    <property type="evidence" value="ECO:0007669"/>
    <property type="project" value="RHEA"/>
</dbReference>
<dbReference type="GO" id="GO:0006000">
    <property type="term" value="P:fructose metabolic process"/>
    <property type="evidence" value="ECO:0007669"/>
    <property type="project" value="UniProtKB-UniRule"/>
</dbReference>
<dbReference type="CDD" id="cd00956">
    <property type="entry name" value="Transaldolase_FSA"/>
    <property type="match status" value="1"/>
</dbReference>
<dbReference type="FunFam" id="3.20.20.70:FF:000018">
    <property type="entry name" value="Probable transaldolase"/>
    <property type="match status" value="1"/>
</dbReference>
<dbReference type="Gene3D" id="3.20.20.70">
    <property type="entry name" value="Aldolase class I"/>
    <property type="match status" value="1"/>
</dbReference>
<dbReference type="HAMAP" id="MF_00496">
    <property type="entry name" value="F6P_aldolase"/>
    <property type="match status" value="1"/>
</dbReference>
<dbReference type="InterPro" id="IPR013785">
    <property type="entry name" value="Aldolase_TIM"/>
</dbReference>
<dbReference type="InterPro" id="IPR023001">
    <property type="entry name" value="F6P_aldolase"/>
</dbReference>
<dbReference type="InterPro" id="IPR001585">
    <property type="entry name" value="TAL/FSA"/>
</dbReference>
<dbReference type="InterPro" id="IPR004731">
    <property type="entry name" value="Transaldolase_3B/F6P_aldolase"/>
</dbReference>
<dbReference type="InterPro" id="IPR018225">
    <property type="entry name" value="Transaldolase_AS"/>
</dbReference>
<dbReference type="InterPro" id="IPR033919">
    <property type="entry name" value="TSA/FSA_arc/bac"/>
</dbReference>
<dbReference type="NCBIfam" id="TIGR00875">
    <property type="entry name" value="fsa_talC_mipB"/>
    <property type="match status" value="1"/>
</dbReference>
<dbReference type="NCBIfam" id="NF009296">
    <property type="entry name" value="PRK12653.1"/>
    <property type="match status" value="1"/>
</dbReference>
<dbReference type="PANTHER" id="PTHR10683:SF40">
    <property type="entry name" value="FRUCTOSE-6-PHOSPHATE ALDOLASE 1-RELATED"/>
    <property type="match status" value="1"/>
</dbReference>
<dbReference type="PANTHER" id="PTHR10683">
    <property type="entry name" value="TRANSALDOLASE"/>
    <property type="match status" value="1"/>
</dbReference>
<dbReference type="Pfam" id="PF00923">
    <property type="entry name" value="TAL_FSA"/>
    <property type="match status" value="1"/>
</dbReference>
<dbReference type="SUPFAM" id="SSF51569">
    <property type="entry name" value="Aldolase"/>
    <property type="match status" value="1"/>
</dbReference>
<dbReference type="PROSITE" id="PS01054">
    <property type="entry name" value="TRANSALDOLASE_1"/>
    <property type="match status" value="1"/>
</dbReference>
<dbReference type="PROSITE" id="PS00958">
    <property type="entry name" value="TRANSALDOLASE_2"/>
    <property type="match status" value="1"/>
</dbReference>
<evidence type="ECO:0000255" key="1">
    <source>
        <dbReference type="HAMAP-Rule" id="MF_00496"/>
    </source>
</evidence>
<comment type="function">
    <text evidence="1">Catalyzes the reversible formation of fructose 6-phosphate from dihydroxyacetone and D-glyceraldehyde 3-phosphate via an aldolization reaction.</text>
</comment>
<comment type="catalytic activity">
    <reaction evidence="1">
        <text>beta-D-fructose 6-phosphate = dihydroxyacetone + D-glyceraldehyde 3-phosphate</text>
        <dbReference type="Rhea" id="RHEA:28002"/>
        <dbReference type="ChEBI" id="CHEBI:16016"/>
        <dbReference type="ChEBI" id="CHEBI:57634"/>
        <dbReference type="ChEBI" id="CHEBI:59776"/>
    </reaction>
</comment>
<comment type="subunit">
    <text evidence="1">Homodecamer.</text>
</comment>
<comment type="subcellular location">
    <subcellularLocation>
        <location evidence="1">Cytoplasm</location>
    </subcellularLocation>
</comment>
<comment type="similarity">
    <text evidence="1">Belongs to the transaldolase family. Type 3A subfamily.</text>
</comment>
<protein>
    <recommendedName>
        <fullName evidence="1">Fructose-6-phosphate aldolase</fullName>
        <ecNumber evidence="1">4.1.2.-</ecNumber>
    </recommendedName>
</protein>
<name>FSA_SALA4</name>
<feature type="chain" id="PRO_1000126373" description="Fructose-6-phosphate aldolase">
    <location>
        <begin position="1"/>
        <end position="220"/>
    </location>
</feature>
<feature type="active site" description="Schiff-base intermediate with substrate" evidence="1">
    <location>
        <position position="85"/>
    </location>
</feature>
<keyword id="KW-0119">Carbohydrate metabolism</keyword>
<keyword id="KW-0963">Cytoplasm</keyword>
<keyword id="KW-0456">Lyase</keyword>
<keyword id="KW-0704">Schiff base</keyword>